<accession>A6UX84</accession>
<comment type="function">
    <text evidence="1">Required for the formation of a threonylcarbamoyl group on adenosine at position 37 (t(6)A37) in tRNAs that read codons beginning with adenine. Catalyzes the conversion of L-threonine, HCO(3)(-)/CO(2) and ATP to give threonylcarbamoyl-AMP (TC-AMP) as the acyladenylate intermediate, with the release of diphosphate.</text>
</comment>
<comment type="catalytic activity">
    <reaction evidence="1">
        <text>L-threonine + hydrogencarbonate + ATP = L-threonylcarbamoyladenylate + diphosphate + H2O</text>
        <dbReference type="Rhea" id="RHEA:36407"/>
        <dbReference type="ChEBI" id="CHEBI:15377"/>
        <dbReference type="ChEBI" id="CHEBI:17544"/>
        <dbReference type="ChEBI" id="CHEBI:30616"/>
        <dbReference type="ChEBI" id="CHEBI:33019"/>
        <dbReference type="ChEBI" id="CHEBI:57926"/>
        <dbReference type="ChEBI" id="CHEBI:73682"/>
        <dbReference type="EC" id="2.7.7.87"/>
    </reaction>
</comment>
<comment type="subcellular location">
    <subcellularLocation>
        <location evidence="1">Cytoplasm</location>
    </subcellularLocation>
</comment>
<comment type="similarity">
    <text evidence="1">Belongs to the SUA5 family. TsaC subfamily.</text>
</comment>
<sequence length="185" mass="20392">MISSFRAQCAARVVREGGVIAYPTEAVWGLGCDPWNEDAVYRLLALKARPVEKGLIVVAAHIHQLDFLLEDLPDVWLERLAGTWPGPNTWLVPHQDRLPEWVTGVHDSVAVRVTDHPLVQELCYLTGPLISTSANPAGRPAARTRLRVEQYFHDELDGVLGGALGGRRNPSLIRDLVTGQVIRPA</sequence>
<gene>
    <name evidence="1" type="primary">tsaC</name>
    <name type="synonym">rimN</name>
    <name type="ordered locus">PSPA7_0023</name>
</gene>
<protein>
    <recommendedName>
        <fullName evidence="1">Threonylcarbamoyl-AMP synthase</fullName>
        <shortName evidence="1">TC-AMP synthase</shortName>
        <ecNumber evidence="1">2.7.7.87</ecNumber>
    </recommendedName>
    <alternativeName>
        <fullName evidence="1">L-threonylcarbamoyladenylate synthase</fullName>
    </alternativeName>
    <alternativeName>
        <fullName evidence="1">t(6)A37 threonylcarbamoyladenosine biosynthesis protein TsaC</fullName>
    </alternativeName>
    <alternativeName>
        <fullName evidence="1">tRNA threonylcarbamoyladenosine biosynthesis protein TsaC</fullName>
    </alternativeName>
</protein>
<name>TSAC_PSEP7</name>
<reference key="1">
    <citation type="submission" date="2007-06" db="EMBL/GenBank/DDBJ databases">
        <authorList>
            <person name="Dodson R.J."/>
            <person name="Harkins D."/>
            <person name="Paulsen I.T."/>
        </authorList>
    </citation>
    <scope>NUCLEOTIDE SEQUENCE [LARGE SCALE GENOMIC DNA]</scope>
    <source>
        <strain>DSM 24068 / PA7</strain>
    </source>
</reference>
<proteinExistence type="inferred from homology"/>
<dbReference type="EC" id="2.7.7.87" evidence="1"/>
<dbReference type="EMBL" id="CP000744">
    <property type="protein sequence ID" value="ABR85187.1"/>
    <property type="molecule type" value="Genomic_DNA"/>
</dbReference>
<dbReference type="RefSeq" id="WP_011979053.1">
    <property type="nucleotide sequence ID" value="NC_009656.1"/>
</dbReference>
<dbReference type="SMR" id="A6UX84"/>
<dbReference type="GeneID" id="77218564"/>
<dbReference type="KEGG" id="pap:PSPA7_0023"/>
<dbReference type="HOGENOM" id="CLU_031397_6_0_6"/>
<dbReference type="Proteomes" id="UP000001582">
    <property type="component" value="Chromosome"/>
</dbReference>
<dbReference type="GO" id="GO:0005737">
    <property type="term" value="C:cytoplasm"/>
    <property type="evidence" value="ECO:0007669"/>
    <property type="project" value="UniProtKB-SubCell"/>
</dbReference>
<dbReference type="GO" id="GO:0005524">
    <property type="term" value="F:ATP binding"/>
    <property type="evidence" value="ECO:0007669"/>
    <property type="project" value="UniProtKB-UniRule"/>
</dbReference>
<dbReference type="GO" id="GO:0003725">
    <property type="term" value="F:double-stranded RNA binding"/>
    <property type="evidence" value="ECO:0007669"/>
    <property type="project" value="InterPro"/>
</dbReference>
<dbReference type="GO" id="GO:0061710">
    <property type="term" value="F:L-threonylcarbamoyladenylate synthase"/>
    <property type="evidence" value="ECO:0007669"/>
    <property type="project" value="UniProtKB-EC"/>
</dbReference>
<dbReference type="GO" id="GO:0000049">
    <property type="term" value="F:tRNA binding"/>
    <property type="evidence" value="ECO:0007669"/>
    <property type="project" value="TreeGrafter"/>
</dbReference>
<dbReference type="GO" id="GO:0006450">
    <property type="term" value="P:regulation of translational fidelity"/>
    <property type="evidence" value="ECO:0007669"/>
    <property type="project" value="TreeGrafter"/>
</dbReference>
<dbReference type="GO" id="GO:0002949">
    <property type="term" value="P:tRNA threonylcarbamoyladenosine modification"/>
    <property type="evidence" value="ECO:0007669"/>
    <property type="project" value="UniProtKB-UniRule"/>
</dbReference>
<dbReference type="FunFam" id="3.90.870.10:FF:000004">
    <property type="entry name" value="Threonylcarbamoyl-AMP synthase"/>
    <property type="match status" value="1"/>
</dbReference>
<dbReference type="Gene3D" id="3.90.870.10">
    <property type="entry name" value="DHBP synthase"/>
    <property type="match status" value="1"/>
</dbReference>
<dbReference type="HAMAP" id="MF_01852">
    <property type="entry name" value="TsaC"/>
    <property type="match status" value="1"/>
</dbReference>
<dbReference type="InterPro" id="IPR017945">
    <property type="entry name" value="DHBP_synth_RibB-like_a/b_dom"/>
</dbReference>
<dbReference type="InterPro" id="IPR006070">
    <property type="entry name" value="Sua5-like_dom"/>
</dbReference>
<dbReference type="InterPro" id="IPR023535">
    <property type="entry name" value="TC-AMP_synthase"/>
</dbReference>
<dbReference type="InterPro" id="IPR050156">
    <property type="entry name" value="TC-AMP_synthase_SUA5"/>
</dbReference>
<dbReference type="PANTHER" id="PTHR17490">
    <property type="entry name" value="SUA5"/>
    <property type="match status" value="1"/>
</dbReference>
<dbReference type="PANTHER" id="PTHR17490:SF18">
    <property type="entry name" value="THREONYLCARBAMOYL-AMP SYNTHASE"/>
    <property type="match status" value="1"/>
</dbReference>
<dbReference type="Pfam" id="PF01300">
    <property type="entry name" value="Sua5_yciO_yrdC"/>
    <property type="match status" value="1"/>
</dbReference>
<dbReference type="SUPFAM" id="SSF55821">
    <property type="entry name" value="YrdC/RibB"/>
    <property type="match status" value="1"/>
</dbReference>
<dbReference type="PROSITE" id="PS51163">
    <property type="entry name" value="YRDC"/>
    <property type="match status" value="1"/>
</dbReference>
<keyword id="KW-0067">ATP-binding</keyword>
<keyword id="KW-0963">Cytoplasm</keyword>
<keyword id="KW-0547">Nucleotide-binding</keyword>
<keyword id="KW-0548">Nucleotidyltransferase</keyword>
<keyword id="KW-0808">Transferase</keyword>
<keyword id="KW-0819">tRNA processing</keyword>
<evidence type="ECO:0000255" key="1">
    <source>
        <dbReference type="HAMAP-Rule" id="MF_01852"/>
    </source>
</evidence>
<organism>
    <name type="scientific">Pseudomonas paraeruginosa (strain DSM 24068 / PA7)</name>
    <name type="common">Pseudomonas aeruginosa (strain PA7)</name>
    <dbReference type="NCBI Taxonomy" id="381754"/>
    <lineage>
        <taxon>Bacteria</taxon>
        <taxon>Pseudomonadati</taxon>
        <taxon>Pseudomonadota</taxon>
        <taxon>Gammaproteobacteria</taxon>
        <taxon>Pseudomonadales</taxon>
        <taxon>Pseudomonadaceae</taxon>
        <taxon>Pseudomonas</taxon>
        <taxon>Pseudomonas paraeruginosa</taxon>
    </lineage>
</organism>
<feature type="chain" id="PRO_0000352949" description="Threonylcarbamoyl-AMP synthase">
    <location>
        <begin position="1"/>
        <end position="185"/>
    </location>
</feature>
<feature type="domain" description="YrdC-like" evidence="1">
    <location>
        <begin position="4"/>
        <end position="185"/>
    </location>
</feature>